<proteinExistence type="inferred from homology"/>
<reference key="1">
    <citation type="journal article" date="2011" name="MBio">
        <title>Novel metabolic attributes of the genus Cyanothece, comprising a group of unicellular nitrogen-fixing Cyanobacteria.</title>
        <authorList>
            <person name="Bandyopadhyay A."/>
            <person name="Elvitigala T."/>
            <person name="Welsh E."/>
            <person name="Stockel J."/>
            <person name="Liberton M."/>
            <person name="Min H."/>
            <person name="Sherman L.A."/>
            <person name="Pakrasi H.B."/>
        </authorList>
    </citation>
    <scope>NUCLEOTIDE SEQUENCE [LARGE SCALE GENOMIC DNA]</scope>
    <source>
        <strain>PCC 7424</strain>
    </source>
</reference>
<evidence type="ECO:0000255" key="1">
    <source>
        <dbReference type="HAMAP-Rule" id="MF_00145"/>
    </source>
</evidence>
<organism>
    <name type="scientific">Gloeothece citriformis (strain PCC 7424)</name>
    <name type="common">Cyanothece sp. (strain PCC 7424)</name>
    <dbReference type="NCBI Taxonomy" id="65393"/>
    <lineage>
        <taxon>Bacteria</taxon>
        <taxon>Bacillati</taxon>
        <taxon>Cyanobacteriota</taxon>
        <taxon>Cyanophyceae</taxon>
        <taxon>Oscillatoriophycideae</taxon>
        <taxon>Chroococcales</taxon>
        <taxon>Aphanothecaceae</taxon>
        <taxon>Gloeothece</taxon>
        <taxon>Gloeothece citriformis</taxon>
    </lineage>
</organism>
<gene>
    <name evidence="1" type="primary">pgk</name>
    <name type="ordered locus">PCC7424_1584</name>
</gene>
<protein>
    <recommendedName>
        <fullName evidence="1">Phosphoglycerate kinase</fullName>
        <ecNumber evidence="1">2.7.2.3</ecNumber>
    </recommendedName>
</protein>
<dbReference type="EC" id="2.7.2.3" evidence="1"/>
<dbReference type="EMBL" id="CP001291">
    <property type="protein sequence ID" value="ACK70023.1"/>
    <property type="molecule type" value="Genomic_DNA"/>
</dbReference>
<dbReference type="RefSeq" id="WP_012598967.1">
    <property type="nucleotide sequence ID" value="NC_011729.1"/>
</dbReference>
<dbReference type="SMR" id="B7K9Q5"/>
<dbReference type="STRING" id="65393.PCC7424_1584"/>
<dbReference type="KEGG" id="cyc:PCC7424_1584"/>
<dbReference type="eggNOG" id="COG0126">
    <property type="taxonomic scope" value="Bacteria"/>
</dbReference>
<dbReference type="HOGENOM" id="CLU_025427_0_2_3"/>
<dbReference type="OrthoDB" id="9808460at2"/>
<dbReference type="UniPathway" id="UPA00109">
    <property type="reaction ID" value="UER00185"/>
</dbReference>
<dbReference type="Proteomes" id="UP000002384">
    <property type="component" value="Chromosome"/>
</dbReference>
<dbReference type="GO" id="GO:0005829">
    <property type="term" value="C:cytosol"/>
    <property type="evidence" value="ECO:0007669"/>
    <property type="project" value="TreeGrafter"/>
</dbReference>
<dbReference type="GO" id="GO:0043531">
    <property type="term" value="F:ADP binding"/>
    <property type="evidence" value="ECO:0007669"/>
    <property type="project" value="TreeGrafter"/>
</dbReference>
<dbReference type="GO" id="GO:0005524">
    <property type="term" value="F:ATP binding"/>
    <property type="evidence" value="ECO:0007669"/>
    <property type="project" value="UniProtKB-KW"/>
</dbReference>
<dbReference type="GO" id="GO:0004618">
    <property type="term" value="F:phosphoglycerate kinase activity"/>
    <property type="evidence" value="ECO:0007669"/>
    <property type="project" value="UniProtKB-UniRule"/>
</dbReference>
<dbReference type="GO" id="GO:0006094">
    <property type="term" value="P:gluconeogenesis"/>
    <property type="evidence" value="ECO:0007669"/>
    <property type="project" value="TreeGrafter"/>
</dbReference>
<dbReference type="GO" id="GO:0006096">
    <property type="term" value="P:glycolytic process"/>
    <property type="evidence" value="ECO:0007669"/>
    <property type="project" value="UniProtKB-UniRule"/>
</dbReference>
<dbReference type="CDD" id="cd00318">
    <property type="entry name" value="Phosphoglycerate_kinase"/>
    <property type="match status" value="1"/>
</dbReference>
<dbReference type="FunFam" id="3.40.50.1260:FF:000003">
    <property type="entry name" value="Phosphoglycerate kinase"/>
    <property type="match status" value="1"/>
</dbReference>
<dbReference type="FunFam" id="3.40.50.1260:FF:000006">
    <property type="entry name" value="Phosphoglycerate kinase"/>
    <property type="match status" value="1"/>
</dbReference>
<dbReference type="Gene3D" id="3.40.50.1260">
    <property type="entry name" value="Phosphoglycerate kinase, N-terminal domain"/>
    <property type="match status" value="2"/>
</dbReference>
<dbReference type="HAMAP" id="MF_00145">
    <property type="entry name" value="Phosphoglyc_kinase"/>
    <property type="match status" value="1"/>
</dbReference>
<dbReference type="InterPro" id="IPR001576">
    <property type="entry name" value="Phosphoglycerate_kinase"/>
</dbReference>
<dbReference type="InterPro" id="IPR015911">
    <property type="entry name" value="Phosphoglycerate_kinase_CS"/>
</dbReference>
<dbReference type="InterPro" id="IPR015824">
    <property type="entry name" value="Phosphoglycerate_kinase_N"/>
</dbReference>
<dbReference type="InterPro" id="IPR036043">
    <property type="entry name" value="Phosphoglycerate_kinase_sf"/>
</dbReference>
<dbReference type="PANTHER" id="PTHR11406">
    <property type="entry name" value="PHOSPHOGLYCERATE KINASE"/>
    <property type="match status" value="1"/>
</dbReference>
<dbReference type="PANTHER" id="PTHR11406:SF23">
    <property type="entry name" value="PHOSPHOGLYCERATE KINASE 1, CHLOROPLASTIC-RELATED"/>
    <property type="match status" value="1"/>
</dbReference>
<dbReference type="Pfam" id="PF00162">
    <property type="entry name" value="PGK"/>
    <property type="match status" value="1"/>
</dbReference>
<dbReference type="PIRSF" id="PIRSF000724">
    <property type="entry name" value="Pgk"/>
    <property type="match status" value="1"/>
</dbReference>
<dbReference type="PRINTS" id="PR00477">
    <property type="entry name" value="PHGLYCKINASE"/>
</dbReference>
<dbReference type="SUPFAM" id="SSF53748">
    <property type="entry name" value="Phosphoglycerate kinase"/>
    <property type="match status" value="1"/>
</dbReference>
<dbReference type="PROSITE" id="PS00111">
    <property type="entry name" value="PGLYCERATE_KINASE"/>
    <property type="match status" value="1"/>
</dbReference>
<sequence>MPKKTIANLSRADVEGKRVLVRVDFNVPLDDAGNITDDTRIRAALPTIQDLISKGAKVILCSHFGRPKGKVVESMRLTPTAKRLSELLGQDVVMCDDCVGASVTEAVNKLENGQVALLENLRFHAEEEGNDPEFSKQLAANADLYVNDAFGTAHRAHASTEGVTHYLSPSVAGYLIEKELNYLQSAIENPQRPLAAIIGGSKVSSKIGVIETLLEKCDKLLIGGGMIFTFYKARGLSVGKSLVEEDKLELAKSLEAKASEKGVQLLLPTDVVVADAFDANANDKTVKIEEIPDGWMGLDIGPDSVKLFQDALADCKSVIWNGPMGVFEFDKFAKGTEAIAYTLETLTGKGATTIIGGGDSVAAVEKVGVADKMSHISTGGGASLELLEGKVLPGIAALDEA</sequence>
<name>PGK_GLOC7</name>
<keyword id="KW-0067">ATP-binding</keyword>
<keyword id="KW-0963">Cytoplasm</keyword>
<keyword id="KW-0324">Glycolysis</keyword>
<keyword id="KW-0418">Kinase</keyword>
<keyword id="KW-0547">Nucleotide-binding</keyword>
<keyword id="KW-1185">Reference proteome</keyword>
<keyword id="KW-0808">Transferase</keyword>
<accession>B7K9Q5</accession>
<feature type="chain" id="PRO_1000192821" description="Phosphoglycerate kinase">
    <location>
        <begin position="1"/>
        <end position="401"/>
    </location>
</feature>
<feature type="binding site" evidence="1">
    <location>
        <begin position="24"/>
        <end position="26"/>
    </location>
    <ligand>
        <name>substrate</name>
    </ligand>
</feature>
<feature type="binding site" evidence="1">
    <location>
        <position position="40"/>
    </location>
    <ligand>
        <name>substrate</name>
    </ligand>
</feature>
<feature type="binding site" evidence="1">
    <location>
        <begin position="63"/>
        <end position="66"/>
    </location>
    <ligand>
        <name>substrate</name>
    </ligand>
</feature>
<feature type="binding site" evidence="1">
    <location>
        <position position="122"/>
    </location>
    <ligand>
        <name>substrate</name>
    </ligand>
</feature>
<feature type="binding site" evidence="1">
    <location>
        <position position="155"/>
    </location>
    <ligand>
        <name>substrate</name>
    </ligand>
</feature>
<feature type="binding site" evidence="1">
    <location>
        <position position="206"/>
    </location>
    <ligand>
        <name>ATP</name>
        <dbReference type="ChEBI" id="CHEBI:30616"/>
    </ligand>
</feature>
<feature type="binding site" evidence="1">
    <location>
        <position position="297"/>
    </location>
    <ligand>
        <name>ATP</name>
        <dbReference type="ChEBI" id="CHEBI:30616"/>
    </ligand>
</feature>
<feature type="binding site" evidence="1">
    <location>
        <position position="328"/>
    </location>
    <ligand>
        <name>ATP</name>
        <dbReference type="ChEBI" id="CHEBI:30616"/>
    </ligand>
</feature>
<feature type="binding site" evidence="1">
    <location>
        <begin position="357"/>
        <end position="360"/>
    </location>
    <ligand>
        <name>ATP</name>
        <dbReference type="ChEBI" id="CHEBI:30616"/>
    </ligand>
</feature>
<comment type="catalytic activity">
    <reaction evidence="1">
        <text>(2R)-3-phosphoglycerate + ATP = (2R)-3-phospho-glyceroyl phosphate + ADP</text>
        <dbReference type="Rhea" id="RHEA:14801"/>
        <dbReference type="ChEBI" id="CHEBI:30616"/>
        <dbReference type="ChEBI" id="CHEBI:57604"/>
        <dbReference type="ChEBI" id="CHEBI:58272"/>
        <dbReference type="ChEBI" id="CHEBI:456216"/>
        <dbReference type="EC" id="2.7.2.3"/>
    </reaction>
</comment>
<comment type="pathway">
    <text evidence="1">Carbohydrate degradation; glycolysis; pyruvate from D-glyceraldehyde 3-phosphate: step 2/5.</text>
</comment>
<comment type="subunit">
    <text evidence="1">Monomer.</text>
</comment>
<comment type="subcellular location">
    <subcellularLocation>
        <location evidence="1">Cytoplasm</location>
    </subcellularLocation>
</comment>
<comment type="similarity">
    <text evidence="1">Belongs to the phosphoglycerate kinase family.</text>
</comment>